<accession>B2K461</accession>
<evidence type="ECO:0000255" key="1">
    <source>
        <dbReference type="HAMAP-Rule" id="MF_00169"/>
    </source>
</evidence>
<protein>
    <recommendedName>
        <fullName evidence="1">3-dehydroquinate dehydratase</fullName>
        <shortName evidence="1">3-dehydroquinase</shortName>
        <ecNumber evidence="1">4.2.1.10</ecNumber>
    </recommendedName>
    <alternativeName>
        <fullName evidence="1">Type II DHQase</fullName>
    </alternativeName>
</protein>
<sequence length="150" mass="16395">MSDKFHILLLNGPNLNLLGTREPEKYGYTTLAEIVSQLEIQAQGMDVALSHLQSNAEHALIDSIHQARGNTDFILINPAAFTHTSVALRDALLGVQIPFIEIHLSNVHAREPFRHHSYLSDIAVGVICGLGADGYNFALQAAVNRLSKSN</sequence>
<name>AROQ_YERPB</name>
<gene>
    <name evidence="1" type="primary">aroQ</name>
    <name type="ordered locus">YPTS_3757</name>
</gene>
<dbReference type="EC" id="4.2.1.10" evidence="1"/>
<dbReference type="EMBL" id="CP001048">
    <property type="protein sequence ID" value="ACC90710.1"/>
    <property type="molecule type" value="Genomic_DNA"/>
</dbReference>
<dbReference type="RefSeq" id="WP_002210071.1">
    <property type="nucleotide sequence ID" value="NZ_CP009780.1"/>
</dbReference>
<dbReference type="SMR" id="B2K461"/>
<dbReference type="GeneID" id="57975085"/>
<dbReference type="KEGG" id="ypb:YPTS_3757"/>
<dbReference type="PATRIC" id="fig|502801.10.peg.3215"/>
<dbReference type="UniPathway" id="UPA00053">
    <property type="reaction ID" value="UER00086"/>
</dbReference>
<dbReference type="GO" id="GO:0003855">
    <property type="term" value="F:3-dehydroquinate dehydratase activity"/>
    <property type="evidence" value="ECO:0007669"/>
    <property type="project" value="UniProtKB-UniRule"/>
</dbReference>
<dbReference type="GO" id="GO:0008652">
    <property type="term" value="P:amino acid biosynthetic process"/>
    <property type="evidence" value="ECO:0007669"/>
    <property type="project" value="UniProtKB-KW"/>
</dbReference>
<dbReference type="GO" id="GO:0009073">
    <property type="term" value="P:aromatic amino acid family biosynthetic process"/>
    <property type="evidence" value="ECO:0007669"/>
    <property type="project" value="UniProtKB-KW"/>
</dbReference>
<dbReference type="GO" id="GO:0009423">
    <property type="term" value="P:chorismate biosynthetic process"/>
    <property type="evidence" value="ECO:0007669"/>
    <property type="project" value="UniProtKB-UniRule"/>
</dbReference>
<dbReference type="GO" id="GO:0019631">
    <property type="term" value="P:quinate catabolic process"/>
    <property type="evidence" value="ECO:0007669"/>
    <property type="project" value="TreeGrafter"/>
</dbReference>
<dbReference type="CDD" id="cd00466">
    <property type="entry name" value="DHQase_II"/>
    <property type="match status" value="1"/>
</dbReference>
<dbReference type="Gene3D" id="3.40.50.9100">
    <property type="entry name" value="Dehydroquinase, class II"/>
    <property type="match status" value="1"/>
</dbReference>
<dbReference type="HAMAP" id="MF_00169">
    <property type="entry name" value="AroQ"/>
    <property type="match status" value="1"/>
</dbReference>
<dbReference type="InterPro" id="IPR001874">
    <property type="entry name" value="DHquinase_II"/>
</dbReference>
<dbReference type="InterPro" id="IPR018509">
    <property type="entry name" value="DHquinase_II_CS"/>
</dbReference>
<dbReference type="InterPro" id="IPR036441">
    <property type="entry name" value="DHquinase_II_sf"/>
</dbReference>
<dbReference type="NCBIfam" id="TIGR01088">
    <property type="entry name" value="aroQ"/>
    <property type="match status" value="1"/>
</dbReference>
<dbReference type="NCBIfam" id="NF003804">
    <property type="entry name" value="PRK05395.1-1"/>
    <property type="match status" value="1"/>
</dbReference>
<dbReference type="NCBIfam" id="NF003805">
    <property type="entry name" value="PRK05395.1-2"/>
    <property type="match status" value="1"/>
</dbReference>
<dbReference type="NCBIfam" id="NF003806">
    <property type="entry name" value="PRK05395.1-3"/>
    <property type="match status" value="1"/>
</dbReference>
<dbReference type="NCBIfam" id="NF003807">
    <property type="entry name" value="PRK05395.1-4"/>
    <property type="match status" value="1"/>
</dbReference>
<dbReference type="PANTHER" id="PTHR21272">
    <property type="entry name" value="CATABOLIC 3-DEHYDROQUINASE"/>
    <property type="match status" value="1"/>
</dbReference>
<dbReference type="PANTHER" id="PTHR21272:SF3">
    <property type="entry name" value="CATABOLIC 3-DEHYDROQUINASE"/>
    <property type="match status" value="1"/>
</dbReference>
<dbReference type="Pfam" id="PF01220">
    <property type="entry name" value="DHquinase_II"/>
    <property type="match status" value="1"/>
</dbReference>
<dbReference type="PIRSF" id="PIRSF001399">
    <property type="entry name" value="DHquinase_II"/>
    <property type="match status" value="1"/>
</dbReference>
<dbReference type="SUPFAM" id="SSF52304">
    <property type="entry name" value="Type II 3-dehydroquinate dehydratase"/>
    <property type="match status" value="1"/>
</dbReference>
<dbReference type="PROSITE" id="PS01029">
    <property type="entry name" value="DEHYDROQUINASE_II"/>
    <property type="match status" value="1"/>
</dbReference>
<feature type="chain" id="PRO_1000097636" description="3-dehydroquinate dehydratase">
    <location>
        <begin position="1"/>
        <end position="150"/>
    </location>
</feature>
<feature type="active site" description="Proton acceptor" evidence="1">
    <location>
        <position position="26"/>
    </location>
</feature>
<feature type="active site" description="Proton donor" evidence="1">
    <location>
        <position position="103"/>
    </location>
</feature>
<feature type="binding site" evidence="1">
    <location>
        <position position="77"/>
    </location>
    <ligand>
        <name>substrate</name>
    </ligand>
</feature>
<feature type="binding site" evidence="1">
    <location>
        <position position="83"/>
    </location>
    <ligand>
        <name>substrate</name>
    </ligand>
</feature>
<feature type="binding site" evidence="1">
    <location>
        <position position="90"/>
    </location>
    <ligand>
        <name>substrate</name>
    </ligand>
</feature>
<feature type="binding site" evidence="1">
    <location>
        <begin position="104"/>
        <end position="105"/>
    </location>
    <ligand>
        <name>substrate</name>
    </ligand>
</feature>
<feature type="binding site" evidence="1">
    <location>
        <position position="114"/>
    </location>
    <ligand>
        <name>substrate</name>
    </ligand>
</feature>
<feature type="site" description="Transition state stabilizer" evidence="1">
    <location>
        <position position="21"/>
    </location>
</feature>
<organism>
    <name type="scientific">Yersinia pseudotuberculosis serotype IB (strain PB1/+)</name>
    <dbReference type="NCBI Taxonomy" id="502801"/>
    <lineage>
        <taxon>Bacteria</taxon>
        <taxon>Pseudomonadati</taxon>
        <taxon>Pseudomonadota</taxon>
        <taxon>Gammaproteobacteria</taxon>
        <taxon>Enterobacterales</taxon>
        <taxon>Yersiniaceae</taxon>
        <taxon>Yersinia</taxon>
    </lineage>
</organism>
<reference key="1">
    <citation type="submission" date="2008-04" db="EMBL/GenBank/DDBJ databases">
        <title>Complete sequence of Yersinia pseudotuberculosis PB1/+.</title>
        <authorList>
            <person name="Copeland A."/>
            <person name="Lucas S."/>
            <person name="Lapidus A."/>
            <person name="Glavina del Rio T."/>
            <person name="Dalin E."/>
            <person name="Tice H."/>
            <person name="Bruce D."/>
            <person name="Goodwin L."/>
            <person name="Pitluck S."/>
            <person name="Munk A.C."/>
            <person name="Brettin T."/>
            <person name="Detter J.C."/>
            <person name="Han C."/>
            <person name="Tapia R."/>
            <person name="Schmutz J."/>
            <person name="Larimer F."/>
            <person name="Land M."/>
            <person name="Hauser L."/>
            <person name="Challacombe J.F."/>
            <person name="Green L."/>
            <person name="Lindler L.E."/>
            <person name="Nikolich M.P."/>
            <person name="Richardson P."/>
        </authorList>
    </citation>
    <scope>NUCLEOTIDE SEQUENCE [LARGE SCALE GENOMIC DNA]</scope>
    <source>
        <strain>PB1/+</strain>
    </source>
</reference>
<proteinExistence type="inferred from homology"/>
<comment type="function">
    <text evidence="1">Catalyzes a trans-dehydration via an enolate intermediate.</text>
</comment>
<comment type="catalytic activity">
    <reaction evidence="1">
        <text>3-dehydroquinate = 3-dehydroshikimate + H2O</text>
        <dbReference type="Rhea" id="RHEA:21096"/>
        <dbReference type="ChEBI" id="CHEBI:15377"/>
        <dbReference type="ChEBI" id="CHEBI:16630"/>
        <dbReference type="ChEBI" id="CHEBI:32364"/>
        <dbReference type="EC" id="4.2.1.10"/>
    </reaction>
</comment>
<comment type="pathway">
    <text evidence="1">Metabolic intermediate biosynthesis; chorismate biosynthesis; chorismate from D-erythrose 4-phosphate and phosphoenolpyruvate: step 3/7.</text>
</comment>
<comment type="subunit">
    <text evidence="1">Homododecamer.</text>
</comment>
<comment type="similarity">
    <text evidence="1">Belongs to the type-II 3-dehydroquinase family.</text>
</comment>
<keyword id="KW-0028">Amino-acid biosynthesis</keyword>
<keyword id="KW-0057">Aromatic amino acid biosynthesis</keyword>
<keyword id="KW-0456">Lyase</keyword>